<name>UGDH_DROME</name>
<sequence>MKVCCIGAGYVGGPTCAVMALKCPDIVITLVDKSSERIAQWNSDKLPIYEPGLDEVVKKCRNVNLFFSTDIETAIKEADLIFISVNTPTKTCGNGKGRAADLKYVESAARMIAEIAQSNKIVVEKSTVPVRAAESIMHILRANQKPGIHYDILSNPEFLAEGTAINDLLNADRVLIGGEETPEGHQAVEKLSWIYEHWIPKQNILTTNTWSSELSKLAANAFLAQRISSINSLSAVCEATGADVSEVARAVGLDSRIGSKFLQASVGFGGSCFQKDILNLIYICENLNLPEVAAYWQQVIDMNEYQKRRFSQKIIESLFNTVSDKRIAILGFAFKKNTGDTRETAAITVCQTLLEEGAALDIYDPKVEPEQIIDDLTHPSVTESPEKVKKAVQIHSDPYSAVRATHALVICTEWDEFVDLDFKRIYQSMMKPAYIFDGRKILDHERLQQIGFHVQTIGKKYQRTGLLRSWGIVPQL</sequence>
<protein>
    <recommendedName>
        <fullName>UDP-glucose 6-dehydrogenase</fullName>
        <shortName>UDP-Glc dehydrogenase</shortName>
        <shortName>UDP-GlcDH</shortName>
        <shortName>UDPGDH</shortName>
        <ecNumber>1.1.1.22</ecNumber>
    </recommendedName>
    <alternativeName>
        <fullName>Protein sugarless</fullName>
    </alternativeName>
    <alternativeName>
        <fullName>Protein suppenkasper</fullName>
    </alternativeName>
</protein>
<reference key="1">
    <citation type="journal article" date="1997" name="Development">
        <title>Genetic evidence that heparin-like glycosaminoglycans are involved in wingless signaling.</title>
        <authorList>
            <person name="Binari R.C."/>
            <person name="Staveley B.E."/>
            <person name="Johnson W.A."/>
            <person name="Godavarti R."/>
            <person name="Sasisekharan R."/>
            <person name="Manoukian A.S."/>
        </authorList>
    </citation>
    <scope>NUCLEOTIDE SEQUENCE [MRNA]</scope>
    <scope>FUNCTION</scope>
    <scope>CATALYTIC ACTIVITY</scope>
    <scope>PATHWAY</scope>
    <scope>DISRUPTION PHENOTYPE</scope>
</reference>
<reference key="2">
    <citation type="journal article" date="1997" name="Development">
        <title>The Drosophila sugarless gene modulates Wingless signaling and encodes an enzyme involved in polysaccharide biosynthesis.</title>
        <authorList>
            <person name="Haecker U."/>
            <person name="Lin X."/>
            <person name="Perrimon N."/>
        </authorList>
    </citation>
    <scope>NUCLEOTIDE SEQUENCE [MRNA]</scope>
    <scope>FUNCTION</scope>
</reference>
<reference key="3">
    <citation type="journal article" date="1997" name="Development">
        <title>Defects in glucuronate biosynthesis disrupt Wingless signaling in Drosophila.</title>
        <authorList>
            <person name="Haerry T.E."/>
            <person name="Heslip T.R."/>
            <person name="Marsh J.L."/>
            <person name="O'Connor M.B."/>
        </authorList>
    </citation>
    <scope>NUCLEOTIDE SEQUENCE [MRNA]</scope>
    <scope>FUNCTION</scope>
    <scope>DISRUPTION PHENOTYPE</scope>
</reference>
<reference key="4">
    <citation type="submission" date="1997-06" db="EMBL/GenBank/DDBJ databases">
        <title>Mutation in the Drosophila gene encoding UDP-glucose dehydrogenase affects expression of unlinked genes.</title>
        <authorList>
            <person name="Benevolenskaya E.V."/>
            <person name="Frolov M.V."/>
            <person name="Birchler J.A."/>
        </authorList>
    </citation>
    <scope>NUCLEOTIDE SEQUENCE [MRNA]</scope>
    <scope>NUCLEOTIDE SEQUENCE [GENOMIC DNA] OF 1-76</scope>
    <source>
        <strain>Canton-S</strain>
    </source>
</reference>
<reference key="5">
    <citation type="journal article" date="2000" name="Science">
        <title>The genome sequence of Drosophila melanogaster.</title>
        <authorList>
            <person name="Adams M.D."/>
            <person name="Celniker S.E."/>
            <person name="Holt R.A."/>
            <person name="Evans C.A."/>
            <person name="Gocayne J.D."/>
            <person name="Amanatides P.G."/>
            <person name="Scherer S.E."/>
            <person name="Li P.W."/>
            <person name="Hoskins R.A."/>
            <person name="Galle R.F."/>
            <person name="George R.A."/>
            <person name="Lewis S.E."/>
            <person name="Richards S."/>
            <person name="Ashburner M."/>
            <person name="Henderson S.N."/>
            <person name="Sutton G.G."/>
            <person name="Wortman J.R."/>
            <person name="Yandell M.D."/>
            <person name="Zhang Q."/>
            <person name="Chen L.X."/>
            <person name="Brandon R.C."/>
            <person name="Rogers Y.-H.C."/>
            <person name="Blazej R.G."/>
            <person name="Champe M."/>
            <person name="Pfeiffer B.D."/>
            <person name="Wan K.H."/>
            <person name="Doyle C."/>
            <person name="Baxter E.G."/>
            <person name="Helt G."/>
            <person name="Nelson C.R."/>
            <person name="Miklos G.L.G."/>
            <person name="Abril J.F."/>
            <person name="Agbayani A."/>
            <person name="An H.-J."/>
            <person name="Andrews-Pfannkoch C."/>
            <person name="Baldwin D."/>
            <person name="Ballew R.M."/>
            <person name="Basu A."/>
            <person name="Baxendale J."/>
            <person name="Bayraktaroglu L."/>
            <person name="Beasley E.M."/>
            <person name="Beeson K.Y."/>
            <person name="Benos P.V."/>
            <person name="Berman B.P."/>
            <person name="Bhandari D."/>
            <person name="Bolshakov S."/>
            <person name="Borkova D."/>
            <person name="Botchan M.R."/>
            <person name="Bouck J."/>
            <person name="Brokstein P."/>
            <person name="Brottier P."/>
            <person name="Burtis K.C."/>
            <person name="Busam D.A."/>
            <person name="Butler H."/>
            <person name="Cadieu E."/>
            <person name="Center A."/>
            <person name="Chandra I."/>
            <person name="Cherry J.M."/>
            <person name="Cawley S."/>
            <person name="Dahlke C."/>
            <person name="Davenport L.B."/>
            <person name="Davies P."/>
            <person name="de Pablos B."/>
            <person name="Delcher A."/>
            <person name="Deng Z."/>
            <person name="Mays A.D."/>
            <person name="Dew I."/>
            <person name="Dietz S.M."/>
            <person name="Dodson K."/>
            <person name="Doup L.E."/>
            <person name="Downes M."/>
            <person name="Dugan-Rocha S."/>
            <person name="Dunkov B.C."/>
            <person name="Dunn P."/>
            <person name="Durbin K.J."/>
            <person name="Evangelista C.C."/>
            <person name="Ferraz C."/>
            <person name="Ferriera S."/>
            <person name="Fleischmann W."/>
            <person name="Fosler C."/>
            <person name="Gabrielian A.E."/>
            <person name="Garg N.S."/>
            <person name="Gelbart W.M."/>
            <person name="Glasser K."/>
            <person name="Glodek A."/>
            <person name="Gong F."/>
            <person name="Gorrell J.H."/>
            <person name="Gu Z."/>
            <person name="Guan P."/>
            <person name="Harris M."/>
            <person name="Harris N.L."/>
            <person name="Harvey D.A."/>
            <person name="Heiman T.J."/>
            <person name="Hernandez J.R."/>
            <person name="Houck J."/>
            <person name="Hostin D."/>
            <person name="Houston K.A."/>
            <person name="Howland T.J."/>
            <person name="Wei M.-H."/>
            <person name="Ibegwam C."/>
            <person name="Jalali M."/>
            <person name="Kalush F."/>
            <person name="Karpen G.H."/>
            <person name="Ke Z."/>
            <person name="Kennison J.A."/>
            <person name="Ketchum K.A."/>
            <person name="Kimmel B.E."/>
            <person name="Kodira C.D."/>
            <person name="Kraft C.L."/>
            <person name="Kravitz S."/>
            <person name="Kulp D."/>
            <person name="Lai Z."/>
            <person name="Lasko P."/>
            <person name="Lei Y."/>
            <person name="Levitsky A.A."/>
            <person name="Li J.H."/>
            <person name="Li Z."/>
            <person name="Liang Y."/>
            <person name="Lin X."/>
            <person name="Liu X."/>
            <person name="Mattei B."/>
            <person name="McIntosh T.C."/>
            <person name="McLeod M.P."/>
            <person name="McPherson D."/>
            <person name="Merkulov G."/>
            <person name="Milshina N.V."/>
            <person name="Mobarry C."/>
            <person name="Morris J."/>
            <person name="Moshrefi A."/>
            <person name="Mount S.M."/>
            <person name="Moy M."/>
            <person name="Murphy B."/>
            <person name="Murphy L."/>
            <person name="Muzny D.M."/>
            <person name="Nelson D.L."/>
            <person name="Nelson D.R."/>
            <person name="Nelson K.A."/>
            <person name="Nixon K."/>
            <person name="Nusskern D.R."/>
            <person name="Pacleb J.M."/>
            <person name="Palazzolo M."/>
            <person name="Pittman G.S."/>
            <person name="Pan S."/>
            <person name="Pollard J."/>
            <person name="Puri V."/>
            <person name="Reese M.G."/>
            <person name="Reinert K."/>
            <person name="Remington K."/>
            <person name="Saunders R.D.C."/>
            <person name="Scheeler F."/>
            <person name="Shen H."/>
            <person name="Shue B.C."/>
            <person name="Siden-Kiamos I."/>
            <person name="Simpson M."/>
            <person name="Skupski M.P."/>
            <person name="Smith T.J."/>
            <person name="Spier E."/>
            <person name="Spradling A.C."/>
            <person name="Stapleton M."/>
            <person name="Strong R."/>
            <person name="Sun E."/>
            <person name="Svirskas R."/>
            <person name="Tector C."/>
            <person name="Turner R."/>
            <person name="Venter E."/>
            <person name="Wang A.H."/>
            <person name="Wang X."/>
            <person name="Wang Z.-Y."/>
            <person name="Wassarman D.A."/>
            <person name="Weinstock G.M."/>
            <person name="Weissenbach J."/>
            <person name="Williams S.M."/>
            <person name="Woodage T."/>
            <person name="Worley K.C."/>
            <person name="Wu D."/>
            <person name="Yang S."/>
            <person name="Yao Q.A."/>
            <person name="Ye J."/>
            <person name="Yeh R.-F."/>
            <person name="Zaveri J.S."/>
            <person name="Zhan M."/>
            <person name="Zhang G."/>
            <person name="Zhao Q."/>
            <person name="Zheng L."/>
            <person name="Zheng X.H."/>
            <person name="Zhong F.N."/>
            <person name="Zhong W."/>
            <person name="Zhou X."/>
            <person name="Zhu S.C."/>
            <person name="Zhu X."/>
            <person name="Smith H.O."/>
            <person name="Gibbs R.A."/>
            <person name="Myers E.W."/>
            <person name="Rubin G.M."/>
            <person name="Venter J.C."/>
        </authorList>
    </citation>
    <scope>NUCLEOTIDE SEQUENCE [LARGE SCALE GENOMIC DNA]</scope>
    <source>
        <strain>Berkeley</strain>
    </source>
</reference>
<reference key="6">
    <citation type="journal article" date="2002" name="Genome Biol.">
        <title>Annotation of the Drosophila melanogaster euchromatic genome: a systematic review.</title>
        <authorList>
            <person name="Misra S."/>
            <person name="Crosby M.A."/>
            <person name="Mungall C.J."/>
            <person name="Matthews B.B."/>
            <person name="Campbell K.S."/>
            <person name="Hradecky P."/>
            <person name="Huang Y."/>
            <person name="Kaminker J.S."/>
            <person name="Millburn G.H."/>
            <person name="Prochnik S.E."/>
            <person name="Smith C.D."/>
            <person name="Tupy J.L."/>
            <person name="Whitfield E.J."/>
            <person name="Bayraktaroglu L."/>
            <person name="Berman B.P."/>
            <person name="Bettencourt B.R."/>
            <person name="Celniker S.E."/>
            <person name="de Grey A.D.N.J."/>
            <person name="Drysdale R.A."/>
            <person name="Harris N.L."/>
            <person name="Richter J."/>
            <person name="Russo S."/>
            <person name="Schroeder A.J."/>
            <person name="Shu S.Q."/>
            <person name="Stapleton M."/>
            <person name="Yamada C."/>
            <person name="Ashburner M."/>
            <person name="Gelbart W.M."/>
            <person name="Rubin G.M."/>
            <person name="Lewis S.E."/>
        </authorList>
    </citation>
    <scope>GENOME REANNOTATION</scope>
    <source>
        <strain>Berkeley</strain>
    </source>
</reference>
<reference key="7">
    <citation type="journal article" date="2002" name="Genome Biol.">
        <title>A Drosophila full-length cDNA resource.</title>
        <authorList>
            <person name="Stapleton M."/>
            <person name="Carlson J.W."/>
            <person name="Brokstein P."/>
            <person name="Yu C."/>
            <person name="Champe M."/>
            <person name="George R.A."/>
            <person name="Guarin H."/>
            <person name="Kronmiller B."/>
            <person name="Pacleb J.M."/>
            <person name="Park S."/>
            <person name="Wan K.H."/>
            <person name="Rubin G.M."/>
            <person name="Celniker S.E."/>
        </authorList>
    </citation>
    <scope>NUCLEOTIDE SEQUENCE [LARGE SCALE MRNA]</scope>
    <source>
        <strain>Berkeley</strain>
        <tissue>Embryo</tissue>
    </source>
</reference>
<feature type="chain" id="PRO_0000074064" description="UDP-glucose 6-dehydrogenase">
    <location>
        <begin position="1"/>
        <end position="476"/>
    </location>
</feature>
<feature type="active site" description="Nucleophile" evidence="1">
    <location>
        <position position="272"/>
    </location>
</feature>
<feature type="binding site" evidence="1">
    <location>
        <begin position="7"/>
        <end position="12"/>
    </location>
    <ligand>
        <name>NAD(+)</name>
        <dbReference type="ChEBI" id="CHEBI:57540"/>
    </ligand>
</feature>
<feature type="binding site" evidence="1">
    <location>
        <position position="32"/>
    </location>
    <ligand>
        <name>NAD(+)</name>
        <dbReference type="ChEBI" id="CHEBI:57540"/>
    </ligand>
</feature>
<feature type="binding site" evidence="1">
    <location>
        <position position="37"/>
    </location>
    <ligand>
        <name>NAD(+)</name>
        <dbReference type="ChEBI" id="CHEBI:57540"/>
    </ligand>
</feature>
<feature type="binding site" evidence="1">
    <location>
        <begin position="85"/>
        <end position="89"/>
    </location>
    <ligand>
        <name>NAD(+)</name>
        <dbReference type="ChEBI" id="CHEBI:57540"/>
    </ligand>
</feature>
<feature type="binding site" evidence="1">
    <location>
        <begin position="126"/>
        <end position="127"/>
    </location>
    <ligand>
        <name>NAD(+)</name>
        <dbReference type="ChEBI" id="CHEBI:57540"/>
    </ligand>
</feature>
<feature type="binding site" evidence="1">
    <location>
        <begin position="157"/>
        <end position="161"/>
    </location>
    <ligand>
        <name>substrate</name>
    </ligand>
</feature>
<feature type="binding site" evidence="1">
    <location>
        <position position="161"/>
    </location>
    <ligand>
        <name>NAD(+)</name>
        <dbReference type="ChEBI" id="CHEBI:57540"/>
    </ligand>
</feature>
<feature type="binding site" evidence="1">
    <location>
        <begin position="216"/>
        <end position="220"/>
    </location>
    <ligand>
        <name>substrate</name>
    </ligand>
</feature>
<feature type="binding site" evidence="1">
    <location>
        <position position="256"/>
    </location>
    <ligand>
        <name>substrate</name>
    </ligand>
</feature>
<feature type="binding site" evidence="1">
    <location>
        <begin position="263"/>
        <end position="269"/>
    </location>
    <ligand>
        <name>substrate</name>
    </ligand>
</feature>
<feature type="binding site" evidence="1">
    <location>
        <begin position="272"/>
        <end position="275"/>
    </location>
    <ligand>
        <name>NAD(+)</name>
        <dbReference type="ChEBI" id="CHEBI:57540"/>
    </ligand>
</feature>
<feature type="binding site" evidence="1">
    <location>
        <begin position="334"/>
        <end position="335"/>
    </location>
    <ligand>
        <name>substrate</name>
    </ligand>
</feature>
<feature type="binding site" evidence="1">
    <location>
        <position position="342"/>
    </location>
    <ligand>
        <name>NAD(+)</name>
        <dbReference type="ChEBI" id="CHEBI:57540"/>
    </ligand>
</feature>
<feature type="binding site" evidence="1">
    <location>
        <position position="439"/>
    </location>
    <ligand>
        <name>substrate</name>
    </ligand>
</feature>
<feature type="sequence conflict" description="In Ref. 3; AAC97125." evidence="5" ref="3">
    <original>K</original>
    <variation>R</variation>
    <location>
        <position position="59"/>
    </location>
</feature>
<evidence type="ECO:0000250" key="1">
    <source>
        <dbReference type="UniProtKB" id="O60701"/>
    </source>
</evidence>
<evidence type="ECO:0000269" key="2">
    <source>
    </source>
</evidence>
<evidence type="ECO:0000269" key="3">
    <source>
    </source>
</evidence>
<evidence type="ECO:0000269" key="4">
    <source>
    </source>
</evidence>
<evidence type="ECO:0000305" key="5"/>
<keyword id="KW-0520">NAD</keyword>
<keyword id="KW-0560">Oxidoreductase</keyword>
<keyword id="KW-1185">Reference proteome</keyword>
<keyword id="KW-0879">Wnt signaling pathway</keyword>
<accession>O02373</accession>
<accession>O02647</accession>
<accession>Q9VRZ9</accession>
<proteinExistence type="evidence at protein level"/>
<organism>
    <name type="scientific">Drosophila melanogaster</name>
    <name type="common">Fruit fly</name>
    <dbReference type="NCBI Taxonomy" id="7227"/>
    <lineage>
        <taxon>Eukaryota</taxon>
        <taxon>Metazoa</taxon>
        <taxon>Ecdysozoa</taxon>
        <taxon>Arthropoda</taxon>
        <taxon>Hexapoda</taxon>
        <taxon>Insecta</taxon>
        <taxon>Pterygota</taxon>
        <taxon>Neoptera</taxon>
        <taxon>Endopterygota</taxon>
        <taxon>Diptera</taxon>
        <taxon>Brachycera</taxon>
        <taxon>Muscomorpha</taxon>
        <taxon>Ephydroidea</taxon>
        <taxon>Drosophilidae</taxon>
        <taxon>Drosophila</taxon>
        <taxon>Sophophora</taxon>
    </lineage>
</organism>
<gene>
    <name type="primary">sgl</name>
    <name type="synonym">kiwi</name>
    <name type="synonym">ska</name>
    <name type="ORF">CG10072</name>
</gene>
<dbReference type="EC" id="1.1.1.22"/>
<dbReference type="EMBL" id="AF007870">
    <property type="protein sequence ID" value="AAB63208.1"/>
    <property type="molecule type" value="mRNA"/>
</dbReference>
<dbReference type="EMBL" id="AF000570">
    <property type="protein sequence ID" value="AAB58714.1"/>
    <property type="molecule type" value="mRNA"/>
</dbReference>
<dbReference type="EMBL" id="AF009013">
    <property type="protein sequence ID" value="AAB63462.1"/>
    <property type="molecule type" value="mRNA"/>
</dbReference>
<dbReference type="EMBL" id="AF001310">
    <property type="protein sequence ID" value="AAC97125.1"/>
    <property type="molecule type" value="mRNA"/>
</dbReference>
<dbReference type="EMBL" id="AH007072">
    <property type="protein sequence ID" value="AAC97126.1"/>
    <property type="molecule type" value="Genomic_DNA"/>
</dbReference>
<dbReference type="EMBL" id="AE014296">
    <property type="protein sequence ID" value="AAF50631.1"/>
    <property type="molecule type" value="Genomic_DNA"/>
</dbReference>
<dbReference type="EMBL" id="AY052137">
    <property type="protein sequence ID" value="AAK93561.1"/>
    <property type="molecule type" value="mRNA"/>
</dbReference>
<dbReference type="RefSeq" id="NP_476980.1">
    <property type="nucleotide sequence ID" value="NM_057632.4"/>
</dbReference>
<dbReference type="SMR" id="O02373"/>
<dbReference type="BioGRID" id="64209">
    <property type="interactions" value="9"/>
</dbReference>
<dbReference type="FunCoup" id="O02373">
    <property type="interactions" value="1327"/>
</dbReference>
<dbReference type="IntAct" id="O02373">
    <property type="interactions" value="72"/>
</dbReference>
<dbReference type="STRING" id="7227.FBpp0076647"/>
<dbReference type="GlyGen" id="O02373">
    <property type="glycosylation" value="1 site"/>
</dbReference>
<dbReference type="PaxDb" id="7227-FBpp0076647"/>
<dbReference type="DNASU" id="38760"/>
<dbReference type="EnsemblMetazoa" id="FBtr0076938">
    <property type="protein sequence ID" value="FBpp0076647"/>
    <property type="gene ID" value="FBgn0261445"/>
</dbReference>
<dbReference type="GeneID" id="38760"/>
<dbReference type="KEGG" id="dme:Dmel_CG10072"/>
<dbReference type="AGR" id="FB:FBgn0261445"/>
<dbReference type="CTD" id="24054"/>
<dbReference type="FlyBase" id="FBgn0261445">
    <property type="gene designation" value="sgl"/>
</dbReference>
<dbReference type="VEuPathDB" id="VectorBase:FBgn0261445"/>
<dbReference type="eggNOG" id="KOG2666">
    <property type="taxonomic scope" value="Eukaryota"/>
</dbReference>
<dbReference type="HOGENOM" id="CLU_023810_7_0_1"/>
<dbReference type="InParanoid" id="O02373"/>
<dbReference type="OMA" id="CFIAVGT"/>
<dbReference type="OrthoDB" id="5059218at2759"/>
<dbReference type="PhylomeDB" id="O02373"/>
<dbReference type="Reactome" id="R-DME-173599">
    <property type="pathway name" value="Formation of the active cofactor, UDP-glucuronate"/>
</dbReference>
<dbReference type="SignaLink" id="O02373"/>
<dbReference type="UniPathway" id="UPA00038">
    <property type="reaction ID" value="UER00491"/>
</dbReference>
<dbReference type="BioGRID-ORCS" id="38760">
    <property type="hits" value="0 hits in 1 CRISPR screen"/>
</dbReference>
<dbReference type="GenomeRNAi" id="38760"/>
<dbReference type="PRO" id="PR:O02373"/>
<dbReference type="Proteomes" id="UP000000803">
    <property type="component" value="Chromosome 3L"/>
</dbReference>
<dbReference type="Bgee" id="FBgn0261445">
    <property type="expression patterns" value="Expressed in thoracico-abdominal ganglion (Drosophila) and 157 other cell types or tissues"/>
</dbReference>
<dbReference type="ExpressionAtlas" id="O02373">
    <property type="expression patterns" value="baseline and differential"/>
</dbReference>
<dbReference type="GO" id="GO:0005737">
    <property type="term" value="C:cytoplasm"/>
    <property type="evidence" value="ECO:0000250"/>
    <property type="project" value="FlyBase"/>
</dbReference>
<dbReference type="GO" id="GO:0005634">
    <property type="term" value="C:nucleus"/>
    <property type="evidence" value="ECO:0000318"/>
    <property type="project" value="GO_Central"/>
</dbReference>
<dbReference type="GO" id="GO:0051287">
    <property type="term" value="F:NAD binding"/>
    <property type="evidence" value="ECO:0007669"/>
    <property type="project" value="InterPro"/>
</dbReference>
<dbReference type="GO" id="GO:0003979">
    <property type="term" value="F:UDP-glucose 6-dehydrogenase activity"/>
    <property type="evidence" value="ECO:0000314"/>
    <property type="project" value="FlyBase"/>
</dbReference>
<dbReference type="GO" id="GO:0050650">
    <property type="term" value="P:chondroitin sulfate proteoglycan biosynthetic process"/>
    <property type="evidence" value="ECO:0000315"/>
    <property type="project" value="UniProtKB"/>
</dbReference>
<dbReference type="GO" id="GO:0007427">
    <property type="term" value="P:epithelial cell migration, open tracheal system"/>
    <property type="evidence" value="ECO:0000315"/>
    <property type="project" value="UniProtKB"/>
</dbReference>
<dbReference type="GO" id="GO:0008543">
    <property type="term" value="P:fibroblast growth factor receptor signaling pathway"/>
    <property type="evidence" value="ECO:0000315"/>
    <property type="project" value="UniProtKB"/>
</dbReference>
<dbReference type="GO" id="GO:0006024">
    <property type="term" value="P:glycosaminoglycan biosynthetic process"/>
    <property type="evidence" value="ECO:0000315"/>
    <property type="project" value="UniProtKB"/>
</dbReference>
<dbReference type="GO" id="GO:0015012">
    <property type="term" value="P:heparan sulfate proteoglycan biosynthetic process"/>
    <property type="evidence" value="ECO:0000315"/>
    <property type="project" value="UniProtKB"/>
</dbReference>
<dbReference type="GO" id="GO:0007509">
    <property type="term" value="P:mesoderm migration involved in gastrulation"/>
    <property type="evidence" value="ECO:0000315"/>
    <property type="project" value="UniProtKB"/>
</dbReference>
<dbReference type="GO" id="GO:0007367">
    <property type="term" value="P:segment polarity determination"/>
    <property type="evidence" value="ECO:0000315"/>
    <property type="project" value="FlyBase"/>
</dbReference>
<dbReference type="GO" id="GO:0006065">
    <property type="term" value="P:UDP-glucuronate biosynthetic process"/>
    <property type="evidence" value="ECO:0000314"/>
    <property type="project" value="FlyBase"/>
</dbReference>
<dbReference type="GO" id="GO:0016055">
    <property type="term" value="P:Wnt signaling pathway"/>
    <property type="evidence" value="ECO:0007669"/>
    <property type="project" value="UniProtKB-KW"/>
</dbReference>
<dbReference type="FunFam" id="1.20.5.100:FF:000001">
    <property type="entry name" value="UDP-glucose 6-dehydrogenase"/>
    <property type="match status" value="1"/>
</dbReference>
<dbReference type="FunFam" id="3.40.50.720:FF:000032">
    <property type="entry name" value="UDP-glucose 6-dehydrogenase"/>
    <property type="match status" value="1"/>
</dbReference>
<dbReference type="FunFam" id="3.40.50.720:FF:000114">
    <property type="entry name" value="UDP-glucose 6-dehydrogenase"/>
    <property type="match status" value="1"/>
</dbReference>
<dbReference type="Gene3D" id="1.20.5.100">
    <property type="entry name" value="Cytochrome c1, transmembrane anchor, C-terminal"/>
    <property type="match status" value="1"/>
</dbReference>
<dbReference type="Gene3D" id="3.40.50.720">
    <property type="entry name" value="NAD(P)-binding Rossmann-like Domain"/>
    <property type="match status" value="2"/>
</dbReference>
<dbReference type="InterPro" id="IPR008927">
    <property type="entry name" value="6-PGluconate_DH-like_C_sf"/>
</dbReference>
<dbReference type="InterPro" id="IPR036291">
    <property type="entry name" value="NAD(P)-bd_dom_sf"/>
</dbReference>
<dbReference type="InterPro" id="IPR017476">
    <property type="entry name" value="UDP-Glc/GDP-Man"/>
</dbReference>
<dbReference type="InterPro" id="IPR014027">
    <property type="entry name" value="UDP-Glc/GDP-Man_DH_C"/>
</dbReference>
<dbReference type="InterPro" id="IPR036220">
    <property type="entry name" value="UDP-Glc/GDP-Man_DH_C_sf"/>
</dbReference>
<dbReference type="InterPro" id="IPR014026">
    <property type="entry name" value="UDP-Glc/GDP-Man_DH_dimer"/>
</dbReference>
<dbReference type="InterPro" id="IPR001732">
    <property type="entry name" value="UDP-Glc/GDP-Man_DH_N"/>
</dbReference>
<dbReference type="InterPro" id="IPR028356">
    <property type="entry name" value="UDPglc_DH_euk"/>
</dbReference>
<dbReference type="NCBIfam" id="TIGR03026">
    <property type="entry name" value="NDP-sugDHase"/>
    <property type="match status" value="1"/>
</dbReference>
<dbReference type="PANTHER" id="PTHR11374:SF3">
    <property type="entry name" value="UDP-GLUCOSE 6-DEHYDROGENASE"/>
    <property type="match status" value="1"/>
</dbReference>
<dbReference type="PANTHER" id="PTHR11374">
    <property type="entry name" value="UDP-GLUCOSE DEHYDROGENASE/UDP-MANNAC DEHYDROGENASE"/>
    <property type="match status" value="1"/>
</dbReference>
<dbReference type="Pfam" id="PF00984">
    <property type="entry name" value="UDPG_MGDP_dh"/>
    <property type="match status" value="1"/>
</dbReference>
<dbReference type="Pfam" id="PF03720">
    <property type="entry name" value="UDPG_MGDP_dh_C"/>
    <property type="match status" value="1"/>
</dbReference>
<dbReference type="Pfam" id="PF03721">
    <property type="entry name" value="UDPG_MGDP_dh_N"/>
    <property type="match status" value="1"/>
</dbReference>
<dbReference type="PIRSF" id="PIRSF500133">
    <property type="entry name" value="UDPglc_DH_euk"/>
    <property type="match status" value="1"/>
</dbReference>
<dbReference type="PIRSF" id="PIRSF000124">
    <property type="entry name" value="UDPglc_GDPman_dh"/>
    <property type="match status" value="1"/>
</dbReference>
<dbReference type="SMART" id="SM00984">
    <property type="entry name" value="UDPG_MGDP_dh_C"/>
    <property type="match status" value="1"/>
</dbReference>
<dbReference type="SUPFAM" id="SSF48179">
    <property type="entry name" value="6-phosphogluconate dehydrogenase C-terminal domain-like"/>
    <property type="match status" value="1"/>
</dbReference>
<dbReference type="SUPFAM" id="SSF51735">
    <property type="entry name" value="NAD(P)-binding Rossmann-fold domains"/>
    <property type="match status" value="1"/>
</dbReference>
<dbReference type="SUPFAM" id="SSF52413">
    <property type="entry name" value="UDP-glucose/GDP-mannose dehydrogenase C-terminal domain"/>
    <property type="match status" value="1"/>
</dbReference>
<comment type="function">
    <text evidence="2 3 4">Involved in the biosynthesis of glycosaminoglycans; hyaluronan, chondroitin sulfate and heparan sulfate. Required for wingless signaling in different tissues.</text>
</comment>
<comment type="catalytic activity">
    <reaction evidence="2">
        <text>UDP-alpha-D-glucose + 2 NAD(+) + H2O = UDP-alpha-D-glucuronate + 2 NADH + 3 H(+)</text>
        <dbReference type="Rhea" id="RHEA:23596"/>
        <dbReference type="ChEBI" id="CHEBI:15377"/>
        <dbReference type="ChEBI" id="CHEBI:15378"/>
        <dbReference type="ChEBI" id="CHEBI:57540"/>
        <dbReference type="ChEBI" id="CHEBI:57945"/>
        <dbReference type="ChEBI" id="CHEBI:58052"/>
        <dbReference type="ChEBI" id="CHEBI:58885"/>
        <dbReference type="EC" id="1.1.1.22"/>
    </reaction>
</comment>
<comment type="pathway">
    <text evidence="2">Nucleotide-sugar biosynthesis; UDP-alpha-D-glucuronate biosynthesis; UDP-alpha-D-glucuronate from UDP-alpha-D-glucose: step 1/1.</text>
</comment>
<comment type="disruption phenotype">
    <text evidence="2 3">'Wingless-like' cuticular phenotype; reduced growth of imaginal disks and pattern defects.</text>
</comment>
<comment type="similarity">
    <text evidence="5">Belongs to the UDP-glucose/GDP-mannose dehydrogenase family.</text>
</comment>